<evidence type="ECO:0000255" key="1"/>
<evidence type="ECO:0000305" key="2"/>
<proteinExistence type="predicted"/>
<comment type="subcellular location">
    <subcellularLocation>
        <location evidence="2">Cell membrane</location>
        <topology evidence="2">Multi-pass membrane protein</topology>
    </subcellularLocation>
</comment>
<comment type="similarity">
    <text evidence="2">To M.tuberculosis Rv1510 and M.bovis Mb3654.</text>
</comment>
<accession>P9WKX8</accession>
<accession>L0TD37</accession>
<accession>O06377</accession>
<keyword id="KW-1003">Cell membrane</keyword>
<keyword id="KW-0472">Membrane</keyword>
<keyword id="KW-1185">Reference proteome</keyword>
<keyword id="KW-0812">Transmembrane</keyword>
<keyword id="KW-1133">Transmembrane helix</keyword>
<reference key="1">
    <citation type="journal article" date="2002" name="J. Bacteriol.">
        <title>Whole-genome comparison of Mycobacterium tuberculosis clinical and laboratory strains.</title>
        <authorList>
            <person name="Fleischmann R.D."/>
            <person name="Alland D."/>
            <person name="Eisen J.A."/>
            <person name="Carpenter L."/>
            <person name="White O."/>
            <person name="Peterson J.D."/>
            <person name="DeBoy R.T."/>
            <person name="Dodson R.J."/>
            <person name="Gwinn M.L."/>
            <person name="Haft D.H."/>
            <person name="Hickey E.K."/>
            <person name="Kolonay J.F."/>
            <person name="Nelson W.C."/>
            <person name="Umayam L.A."/>
            <person name="Ermolaeva M.D."/>
            <person name="Salzberg S.L."/>
            <person name="Delcher A."/>
            <person name="Utterback T.R."/>
            <person name="Weidman J.F."/>
            <person name="Khouri H.M."/>
            <person name="Gill J."/>
            <person name="Mikula A."/>
            <person name="Bishai W."/>
            <person name="Jacobs W.R. Jr."/>
            <person name="Venter J.C."/>
            <person name="Fraser C.M."/>
        </authorList>
    </citation>
    <scope>NUCLEOTIDE SEQUENCE [LARGE SCALE GENOMIC DNA]</scope>
    <source>
        <strain>CDC 1551 / Oshkosh</strain>
    </source>
</reference>
<protein>
    <recommendedName>
        <fullName>Uncharacterized protein MT3732</fullName>
    </recommendedName>
</protein>
<dbReference type="EMBL" id="AE000516">
    <property type="protein sequence ID" value="AAK48093.1"/>
    <property type="molecule type" value="Genomic_DNA"/>
</dbReference>
<dbReference type="PIR" id="G70561">
    <property type="entry name" value="G70561"/>
</dbReference>
<dbReference type="RefSeq" id="WP_003419582.1">
    <property type="nucleotide sequence ID" value="NZ_KK341227.1"/>
</dbReference>
<dbReference type="SMR" id="P9WKX8"/>
<dbReference type="KEGG" id="mtc:MT3732"/>
<dbReference type="PATRIC" id="fig|83331.31.peg.4016"/>
<dbReference type="HOGENOM" id="CLU_039164_0_0_11"/>
<dbReference type="Proteomes" id="UP000001020">
    <property type="component" value="Chromosome"/>
</dbReference>
<dbReference type="GO" id="GO:0005886">
    <property type="term" value="C:plasma membrane"/>
    <property type="evidence" value="ECO:0007669"/>
    <property type="project" value="UniProtKB-SubCell"/>
</dbReference>
<dbReference type="InterPro" id="IPR050833">
    <property type="entry name" value="Poly_Biosynth_Transport"/>
</dbReference>
<dbReference type="PANTHER" id="PTHR30250:SF11">
    <property type="entry name" value="O-ANTIGEN TRANSPORTER-RELATED"/>
    <property type="match status" value="1"/>
</dbReference>
<dbReference type="PANTHER" id="PTHR30250">
    <property type="entry name" value="PST FAMILY PREDICTED COLANIC ACID TRANSPORTER"/>
    <property type="match status" value="1"/>
</dbReference>
<name>Y3630_MYCTO</name>
<gene>
    <name type="ordered locus">MT3732</name>
</gene>
<feature type="chain" id="PRO_0000427576" description="Uncharacterized protein MT3732">
    <location>
        <begin position="1"/>
        <end position="431"/>
    </location>
</feature>
<feature type="transmembrane region" description="Helical" evidence="1">
    <location>
        <begin position="33"/>
        <end position="53"/>
    </location>
</feature>
<feature type="transmembrane region" description="Helical" evidence="1">
    <location>
        <begin position="63"/>
        <end position="83"/>
    </location>
</feature>
<feature type="transmembrane region" description="Helical" evidence="1">
    <location>
        <begin position="111"/>
        <end position="131"/>
    </location>
</feature>
<feature type="transmembrane region" description="Helical" evidence="1">
    <location>
        <begin position="143"/>
        <end position="163"/>
    </location>
</feature>
<feature type="transmembrane region" description="Helical" evidence="1">
    <location>
        <begin position="175"/>
        <end position="195"/>
    </location>
</feature>
<feature type="transmembrane region" description="Helical" evidence="1">
    <location>
        <begin position="197"/>
        <end position="217"/>
    </location>
</feature>
<feature type="transmembrane region" description="Helical" evidence="1">
    <location>
        <begin position="241"/>
        <end position="261"/>
    </location>
</feature>
<feature type="transmembrane region" description="Helical" evidence="1">
    <location>
        <begin position="273"/>
        <end position="293"/>
    </location>
</feature>
<feature type="transmembrane region" description="Helical" evidence="1">
    <location>
        <begin position="318"/>
        <end position="338"/>
    </location>
</feature>
<feature type="transmembrane region" description="Helical" evidence="1">
    <location>
        <begin position="358"/>
        <end position="378"/>
    </location>
</feature>
<feature type="transmembrane region" description="Helical" evidence="1">
    <location>
        <begin position="381"/>
        <end position="401"/>
    </location>
</feature>
<feature type="transmembrane region" description="Helical" evidence="1">
    <location>
        <begin position="407"/>
        <end position="427"/>
    </location>
</feature>
<sequence length="431" mass="43515">MAVGAAAVTEVGDTASPVGSSGASGGAIASGSVARVGTATAVTALCGYAVIYLAARNLAPNGFSVFGVFWGAFGLVTGAANGLLQETTREVRSLGYLDVSADGRRTHPLRVSGMVGLGSLVVIAGSSPLWSGRVFAEARWLSVALLSIGLAGFCLHATLLGMLAGTNRWTQYGALMVADAVIRVVVAAATFVIGWQLVGFIWATVAGSVAWLIMLMTSPPTRAAARLMTPGATATFLRGAAHSIIAAGASAILVMGFPVLLKLTSNELGAQGGVVILAVTLTRAPLLVPLTAMQGNLIAHFVDERTERIRALIAPAALIGGVGAVGMLAAGVVGPWIMRVAFGSEYQSSSALLAWLTAAAVAIAMLTLTGAAAVAAALHRAYSLGWVGATVGSGLLLLLPLSLETRTVVALLCGPLVGIGVHLVALARTDE</sequence>
<organism>
    <name type="scientific">Mycobacterium tuberculosis (strain CDC 1551 / Oshkosh)</name>
    <dbReference type="NCBI Taxonomy" id="83331"/>
    <lineage>
        <taxon>Bacteria</taxon>
        <taxon>Bacillati</taxon>
        <taxon>Actinomycetota</taxon>
        <taxon>Actinomycetes</taxon>
        <taxon>Mycobacteriales</taxon>
        <taxon>Mycobacteriaceae</taxon>
        <taxon>Mycobacterium</taxon>
        <taxon>Mycobacterium tuberculosis complex</taxon>
    </lineage>
</organism>